<name>MT1_COLLI</name>
<dbReference type="PIR" id="S08190">
    <property type="entry name" value="S08190"/>
</dbReference>
<dbReference type="RefSeq" id="XP_005504830.1">
    <property type="nucleotide sequence ID" value="XM_005504773.2"/>
</dbReference>
<dbReference type="SMR" id="P15786"/>
<dbReference type="GeneID" id="102090214"/>
<dbReference type="KEGG" id="clv:102090214"/>
<dbReference type="eggNOG" id="KOG4738">
    <property type="taxonomic scope" value="Eukaryota"/>
</dbReference>
<dbReference type="GO" id="GO:0005737">
    <property type="term" value="C:cytoplasm"/>
    <property type="evidence" value="ECO:0007669"/>
    <property type="project" value="TreeGrafter"/>
</dbReference>
<dbReference type="GO" id="GO:0005634">
    <property type="term" value="C:nucleus"/>
    <property type="evidence" value="ECO:0007669"/>
    <property type="project" value="TreeGrafter"/>
</dbReference>
<dbReference type="GO" id="GO:0046872">
    <property type="term" value="F:metal ion binding"/>
    <property type="evidence" value="ECO:0007669"/>
    <property type="project" value="UniProtKB-KW"/>
</dbReference>
<dbReference type="GO" id="GO:0071276">
    <property type="term" value="P:cellular response to cadmium ion"/>
    <property type="evidence" value="ECO:0007669"/>
    <property type="project" value="TreeGrafter"/>
</dbReference>
<dbReference type="GO" id="GO:0071280">
    <property type="term" value="P:cellular response to copper ion"/>
    <property type="evidence" value="ECO:0007669"/>
    <property type="project" value="TreeGrafter"/>
</dbReference>
<dbReference type="GO" id="GO:0071294">
    <property type="term" value="P:cellular response to zinc ion"/>
    <property type="evidence" value="ECO:0007669"/>
    <property type="project" value="TreeGrafter"/>
</dbReference>
<dbReference type="GO" id="GO:0010273">
    <property type="term" value="P:detoxification of copper ion"/>
    <property type="evidence" value="ECO:0007669"/>
    <property type="project" value="TreeGrafter"/>
</dbReference>
<dbReference type="GO" id="GO:0006882">
    <property type="term" value="P:intracellular zinc ion homeostasis"/>
    <property type="evidence" value="ECO:0007669"/>
    <property type="project" value="TreeGrafter"/>
</dbReference>
<dbReference type="FunFam" id="4.10.10.10:FF:000001">
    <property type="entry name" value="Metallothionein"/>
    <property type="match status" value="1"/>
</dbReference>
<dbReference type="Gene3D" id="4.10.10.10">
    <property type="entry name" value="Metallothionein Isoform II"/>
    <property type="match status" value="1"/>
</dbReference>
<dbReference type="InterPro" id="IPR017854">
    <property type="entry name" value="Metalthion_dom_sf"/>
</dbReference>
<dbReference type="InterPro" id="IPR023587">
    <property type="entry name" value="Metalthion_dom_sf_vert"/>
</dbReference>
<dbReference type="InterPro" id="IPR000006">
    <property type="entry name" value="Metalthion_vert"/>
</dbReference>
<dbReference type="InterPro" id="IPR018064">
    <property type="entry name" value="Metalthion_vert_metal_BS"/>
</dbReference>
<dbReference type="PANTHER" id="PTHR23299">
    <property type="entry name" value="METALLOTHIONEIN"/>
    <property type="match status" value="1"/>
</dbReference>
<dbReference type="PANTHER" id="PTHR23299:SF18">
    <property type="entry name" value="METALLOTHIONEIN-3"/>
    <property type="match status" value="1"/>
</dbReference>
<dbReference type="Pfam" id="PF00131">
    <property type="entry name" value="Metallothio"/>
    <property type="match status" value="1"/>
</dbReference>
<dbReference type="PRINTS" id="PR00860">
    <property type="entry name" value="MTVERTEBRATE"/>
</dbReference>
<dbReference type="SUPFAM" id="SSF57868">
    <property type="entry name" value="Metallothionein"/>
    <property type="match status" value="1"/>
</dbReference>
<dbReference type="PROSITE" id="PS00203">
    <property type="entry name" value="METALLOTHIONEIN_VRT"/>
    <property type="match status" value="1"/>
</dbReference>
<sequence>MDSQDCPCAAGGTCTCGDNCKCKNCKCTSCKKGCCSCCPAGCAKCAQGCVCKGPPSAKCSCCK</sequence>
<reference key="1">
    <citation type="journal article" date="1990" name="Biochim. Biophys. Acta">
        <title>Pigeon metallothionein consists of two species.</title>
        <authorList>
            <person name="Lin L.-Y."/>
            <person name="Lin W.C."/>
            <person name="Huang P.C."/>
        </authorList>
    </citation>
    <scope>PROTEIN SEQUENCE</scope>
    <source>
        <tissue>Liver</tissue>
    </source>
</reference>
<feature type="chain" id="PRO_0000197261" description="Metallothionein-1">
    <location>
        <begin position="1"/>
        <end position="63"/>
    </location>
</feature>
<feature type="region of interest" description="Beta">
    <location>
        <begin position="1"/>
        <end position="30"/>
    </location>
</feature>
<feature type="region of interest" description="Alpha">
    <location>
        <begin position="31"/>
        <end position="63"/>
    </location>
</feature>
<feature type="binding site" evidence="1">
    <location>
        <position position="6"/>
    </location>
    <ligand>
        <name>a divalent metal cation</name>
        <dbReference type="ChEBI" id="CHEBI:60240"/>
        <label>1</label>
        <note>in cluster B</note>
    </ligand>
</feature>
<feature type="binding site" evidence="1">
    <location>
        <position position="8"/>
    </location>
    <ligand>
        <name>a divalent metal cation</name>
        <dbReference type="ChEBI" id="CHEBI:60240"/>
        <label>1</label>
        <note>in cluster B</note>
    </ligand>
</feature>
<feature type="binding site" evidence="1">
    <location>
        <position position="8"/>
    </location>
    <ligand>
        <name>a divalent metal cation</name>
        <dbReference type="ChEBI" id="CHEBI:60240"/>
        <label>2</label>
        <note>in cluster B</note>
    </ligand>
</feature>
<feature type="binding site" evidence="1">
    <location>
        <position position="14"/>
    </location>
    <ligand>
        <name>a divalent metal cation</name>
        <dbReference type="ChEBI" id="CHEBI:60240"/>
        <label>2</label>
        <note>in cluster B</note>
    </ligand>
</feature>
<feature type="binding site" evidence="1">
    <location>
        <position position="16"/>
    </location>
    <ligand>
        <name>a divalent metal cation</name>
        <dbReference type="ChEBI" id="CHEBI:60240"/>
        <label>2</label>
        <note>in cluster B</note>
    </ligand>
</feature>
<feature type="binding site" evidence="1">
    <location>
        <position position="16"/>
    </location>
    <ligand>
        <name>a divalent metal cation</name>
        <dbReference type="ChEBI" id="CHEBI:60240"/>
        <label>3</label>
        <note>in cluster B</note>
    </ligand>
</feature>
<feature type="binding site" evidence="1">
    <location>
        <position position="20"/>
    </location>
    <ligand>
        <name>a divalent metal cation</name>
        <dbReference type="ChEBI" id="CHEBI:60240"/>
        <label>3</label>
        <note>in cluster B</note>
    </ligand>
</feature>
<feature type="binding site" evidence="1">
    <location>
        <position position="22"/>
    </location>
    <ligand>
        <name>a divalent metal cation</name>
        <dbReference type="ChEBI" id="CHEBI:60240"/>
        <label>1</label>
        <note>in cluster B</note>
    </ligand>
</feature>
<feature type="binding site" evidence="1">
    <location>
        <position position="25"/>
    </location>
    <ligand>
        <name>a divalent metal cation</name>
        <dbReference type="ChEBI" id="CHEBI:60240"/>
        <label>1</label>
        <note>in cluster B</note>
    </ligand>
</feature>
<feature type="binding site" evidence="1">
    <location>
        <position position="25"/>
    </location>
    <ligand>
        <name>a divalent metal cation</name>
        <dbReference type="ChEBI" id="CHEBI:60240"/>
        <label>3</label>
        <note>in cluster B</note>
    </ligand>
</feature>
<feature type="binding site" evidence="1">
    <location>
        <position position="27"/>
    </location>
    <ligand>
        <name>a divalent metal cation</name>
        <dbReference type="ChEBI" id="CHEBI:60240"/>
        <label>2</label>
        <note>in cluster B</note>
    </ligand>
</feature>
<feature type="binding site" evidence="1">
    <location>
        <position position="30"/>
    </location>
    <ligand>
        <name>a divalent metal cation</name>
        <dbReference type="ChEBI" id="CHEBI:60240"/>
        <label>3</label>
        <note>in cluster B</note>
    </ligand>
</feature>
<feature type="binding site" evidence="1">
    <location>
        <position position="34"/>
    </location>
    <ligand>
        <name>a divalent metal cation</name>
        <dbReference type="ChEBI" id="CHEBI:60240"/>
        <label>4</label>
        <note>in cluster A</note>
    </ligand>
</feature>
<feature type="binding site" evidence="1">
    <location>
        <position position="35"/>
    </location>
    <ligand>
        <name>a divalent metal cation</name>
        <dbReference type="ChEBI" id="CHEBI:60240"/>
        <label>4</label>
        <note>in cluster A</note>
    </ligand>
</feature>
<feature type="binding site" evidence="1">
    <location>
        <position position="35"/>
    </location>
    <ligand>
        <name>a divalent metal cation</name>
        <dbReference type="ChEBI" id="CHEBI:60240"/>
        <label>5</label>
        <note>in cluster A</note>
    </ligand>
</feature>
<feature type="binding site" evidence="1">
    <location>
        <position position="37"/>
    </location>
    <ligand>
        <name>a divalent metal cation</name>
        <dbReference type="ChEBI" id="CHEBI:60240"/>
        <label>5</label>
        <note>in cluster A</note>
    </ligand>
</feature>
<feature type="binding site" evidence="1">
    <location>
        <position position="38"/>
    </location>
    <ligand>
        <name>a divalent metal cation</name>
        <dbReference type="ChEBI" id="CHEBI:60240"/>
        <label>5</label>
        <note>in cluster A</note>
    </ligand>
</feature>
<feature type="binding site" evidence="1">
    <location>
        <position position="38"/>
    </location>
    <ligand>
        <name>a divalent metal cation</name>
        <dbReference type="ChEBI" id="CHEBI:60240"/>
        <label>6</label>
        <note>in cluster A</note>
    </ligand>
</feature>
<feature type="binding site" evidence="1">
    <location>
        <position position="42"/>
    </location>
    <ligand>
        <name>a divalent metal cation</name>
        <dbReference type="ChEBI" id="CHEBI:60240"/>
        <label>6</label>
        <note>in cluster A</note>
    </ligand>
</feature>
<feature type="binding site" evidence="1">
    <location>
        <position position="45"/>
    </location>
    <ligand>
        <name>a divalent metal cation</name>
        <dbReference type="ChEBI" id="CHEBI:60240"/>
        <label>4</label>
        <note>in cluster A</note>
    </ligand>
</feature>
<feature type="binding site" evidence="1">
    <location>
        <position position="45"/>
    </location>
    <ligand>
        <name>a divalent metal cation</name>
        <dbReference type="ChEBI" id="CHEBI:60240"/>
        <label>6</label>
        <note>in cluster A</note>
    </ligand>
</feature>
<feature type="binding site" evidence="1">
    <location>
        <position position="49"/>
    </location>
    <ligand>
        <name>a divalent metal cation</name>
        <dbReference type="ChEBI" id="CHEBI:60240"/>
        <label>4</label>
        <note>in cluster A</note>
    </ligand>
</feature>
<feature type="binding site" evidence="1">
    <location>
        <position position="51"/>
    </location>
    <ligand>
        <name>a divalent metal cation</name>
        <dbReference type="ChEBI" id="CHEBI:60240"/>
        <label>5</label>
        <note>in cluster A</note>
    </ligand>
</feature>
<feature type="binding site" evidence="1">
    <location>
        <position position="51"/>
    </location>
    <ligand>
        <name>a divalent metal cation</name>
        <dbReference type="ChEBI" id="CHEBI:60240"/>
        <label>7</label>
        <note>in cluster A</note>
    </ligand>
</feature>
<feature type="binding site" evidence="1">
    <location>
        <position position="59"/>
    </location>
    <ligand>
        <name>a divalent metal cation</name>
        <dbReference type="ChEBI" id="CHEBI:60240"/>
        <label>7</label>
        <note>in cluster A</note>
    </ligand>
</feature>
<feature type="binding site" evidence="1">
    <location>
        <position position="61"/>
    </location>
    <ligand>
        <name>a divalent metal cation</name>
        <dbReference type="ChEBI" id="CHEBI:60240"/>
        <label>7</label>
        <note>in cluster A</note>
    </ligand>
</feature>
<feature type="binding site" evidence="1">
    <location>
        <position position="62"/>
    </location>
    <ligand>
        <name>a divalent metal cation</name>
        <dbReference type="ChEBI" id="CHEBI:60240"/>
        <label>6</label>
        <note>in cluster A</note>
    </ligand>
</feature>
<feature type="binding site" evidence="1">
    <location>
        <position position="62"/>
    </location>
    <ligand>
        <name>a divalent metal cation</name>
        <dbReference type="ChEBI" id="CHEBI:60240"/>
        <label>7</label>
        <note>in cluster A</note>
    </ligand>
</feature>
<keyword id="KW-0903">Direct protein sequencing</keyword>
<keyword id="KW-0479">Metal-binding</keyword>
<keyword id="KW-0480">Metal-thiolate cluster</keyword>
<organism>
    <name type="scientific">Columba livia</name>
    <name type="common">Rock dove</name>
    <dbReference type="NCBI Taxonomy" id="8932"/>
    <lineage>
        <taxon>Eukaryota</taxon>
        <taxon>Metazoa</taxon>
        <taxon>Chordata</taxon>
        <taxon>Craniata</taxon>
        <taxon>Vertebrata</taxon>
        <taxon>Euteleostomi</taxon>
        <taxon>Archelosauria</taxon>
        <taxon>Archosauria</taxon>
        <taxon>Dinosauria</taxon>
        <taxon>Saurischia</taxon>
        <taxon>Theropoda</taxon>
        <taxon>Coelurosauria</taxon>
        <taxon>Aves</taxon>
        <taxon>Neognathae</taxon>
        <taxon>Neoaves</taxon>
        <taxon>Columbimorphae</taxon>
        <taxon>Columbiformes</taxon>
        <taxon>Columbidae</taxon>
        <taxon>Columba</taxon>
    </lineage>
</organism>
<comment type="function">
    <text>Metallothioneins have a high content of cysteine residues that bind various heavy metals.</text>
</comment>
<comment type="domain">
    <text>Class I metallothioneins contain 2 metal-binding domains: four divalent ions are chelated within cluster A of the alpha domain and are coordinated via cysteinyl thiolate bridges to 11 cysteine ligands. Cluster B, the corresponding region within the beta domain, can ligate three divalent ions to 9 cysteines.</text>
</comment>
<comment type="similarity">
    <text evidence="2">Belongs to the metallothionein superfamily. Type 1 family.</text>
</comment>
<protein>
    <recommendedName>
        <fullName>Metallothionein-1</fullName>
        <shortName>MT-1</shortName>
    </recommendedName>
    <alternativeName>
        <fullName>Metallothionein-I</fullName>
        <shortName>MT-I</shortName>
    </alternativeName>
</protein>
<proteinExistence type="evidence at protein level"/>
<evidence type="ECO:0000250" key="1">
    <source>
        <dbReference type="UniProtKB" id="P02795"/>
    </source>
</evidence>
<evidence type="ECO:0000305" key="2"/>
<accession>P15786</accession>